<dbReference type="EC" id="1.6.3.-" evidence="1"/>
<dbReference type="EMBL" id="AF036097">
    <property type="protein sequence ID" value="AAC27247.1"/>
    <property type="molecule type" value="mRNA"/>
</dbReference>
<dbReference type="EMBL" id="BC134469">
    <property type="protein sequence ID" value="AAI34470.1"/>
    <property type="molecule type" value="mRNA"/>
</dbReference>
<dbReference type="RefSeq" id="NP_776460.1">
    <property type="nucleotide sequence ID" value="NM_174035.4"/>
</dbReference>
<dbReference type="SMR" id="O46522"/>
<dbReference type="FunCoup" id="O46522">
    <property type="interactions" value="757"/>
</dbReference>
<dbReference type="STRING" id="9913.ENSBTAP00000016904"/>
<dbReference type="GlyCosmos" id="O46522">
    <property type="glycosylation" value="3 sites, No reported glycans"/>
</dbReference>
<dbReference type="GlyGen" id="O46522">
    <property type="glycosylation" value="3 sites"/>
</dbReference>
<dbReference type="PaxDb" id="9913-ENSBTAP00000026580"/>
<dbReference type="Ensembl" id="ENSBTAT00000026580.5">
    <property type="protein sequence ID" value="ENSBTAP00000026580.4"/>
    <property type="gene ID" value="ENSBTAG00000019953.6"/>
</dbReference>
<dbReference type="GeneID" id="281112"/>
<dbReference type="KEGG" id="bta:281112"/>
<dbReference type="CTD" id="1536"/>
<dbReference type="VEuPathDB" id="HostDB:ENSBTAG00000019953"/>
<dbReference type="VGNC" id="VGNC:50265">
    <property type="gene designation" value="CYBB"/>
</dbReference>
<dbReference type="eggNOG" id="KOG0039">
    <property type="taxonomic scope" value="Eukaryota"/>
</dbReference>
<dbReference type="GeneTree" id="ENSGT00940000160244"/>
<dbReference type="HOGENOM" id="CLU_005646_3_1_1"/>
<dbReference type="InParanoid" id="O46522"/>
<dbReference type="OrthoDB" id="167398at2759"/>
<dbReference type="TreeFam" id="TF105354"/>
<dbReference type="Reactome" id="R-BTA-1222556">
    <property type="pathway name" value="ROS and RNS production in phagocytes"/>
</dbReference>
<dbReference type="Reactome" id="R-BTA-1236973">
    <property type="pathway name" value="Cross-presentation of particulate exogenous antigens (phagosomes)"/>
</dbReference>
<dbReference type="Reactome" id="R-BTA-3299685">
    <property type="pathway name" value="Detoxification of Reactive Oxygen Species"/>
</dbReference>
<dbReference type="Reactome" id="R-BTA-4420097">
    <property type="pathway name" value="VEGFA-VEGFR2 Pathway"/>
</dbReference>
<dbReference type="Reactome" id="R-BTA-5668599">
    <property type="pathway name" value="RHO GTPases Activate NADPH Oxidases"/>
</dbReference>
<dbReference type="Reactome" id="R-BTA-6798695">
    <property type="pathway name" value="Neutrophil degranulation"/>
</dbReference>
<dbReference type="Reactome" id="R-BTA-9013149">
    <property type="pathway name" value="RAC1 GTPase cycle"/>
</dbReference>
<dbReference type="Reactome" id="R-BTA-9013404">
    <property type="pathway name" value="RAC2 GTPase cycle"/>
</dbReference>
<dbReference type="Reactome" id="R-BTA-9013423">
    <property type="pathway name" value="RAC3 GTPase cycle"/>
</dbReference>
<dbReference type="Proteomes" id="UP000009136">
    <property type="component" value="Chromosome X"/>
</dbReference>
<dbReference type="Bgee" id="ENSBTAG00000019953">
    <property type="expression patterns" value="Expressed in monocyte and 105 other cell types or tissues"/>
</dbReference>
<dbReference type="GO" id="GO:0005764">
    <property type="term" value="C:lysosome"/>
    <property type="evidence" value="ECO:0000314"/>
    <property type="project" value="AgBase"/>
</dbReference>
<dbReference type="GO" id="GO:0045121">
    <property type="term" value="C:membrane raft"/>
    <property type="evidence" value="ECO:0000314"/>
    <property type="project" value="AgBase"/>
</dbReference>
<dbReference type="GO" id="GO:0034702">
    <property type="term" value="C:monoatomic ion channel complex"/>
    <property type="evidence" value="ECO:0007669"/>
    <property type="project" value="UniProtKB-KW"/>
</dbReference>
<dbReference type="GO" id="GO:0043020">
    <property type="term" value="C:NADPH oxidase complex"/>
    <property type="evidence" value="ECO:0000250"/>
    <property type="project" value="UniProtKB"/>
</dbReference>
<dbReference type="GO" id="GO:0005886">
    <property type="term" value="C:plasma membrane"/>
    <property type="evidence" value="ECO:0000250"/>
    <property type="project" value="UniProtKB"/>
</dbReference>
<dbReference type="GO" id="GO:0009055">
    <property type="term" value="F:electron transfer activity"/>
    <property type="evidence" value="ECO:0007669"/>
    <property type="project" value="Ensembl"/>
</dbReference>
<dbReference type="GO" id="GO:0071949">
    <property type="term" value="F:FAD binding"/>
    <property type="evidence" value="ECO:0000250"/>
    <property type="project" value="UniProtKB"/>
</dbReference>
<dbReference type="GO" id="GO:0020037">
    <property type="term" value="F:heme binding"/>
    <property type="evidence" value="ECO:0007669"/>
    <property type="project" value="Ensembl"/>
</dbReference>
<dbReference type="GO" id="GO:0046872">
    <property type="term" value="F:metal ion binding"/>
    <property type="evidence" value="ECO:0007669"/>
    <property type="project" value="UniProtKB-KW"/>
</dbReference>
<dbReference type="GO" id="GO:0070402">
    <property type="term" value="F:NADPH binding"/>
    <property type="evidence" value="ECO:0000250"/>
    <property type="project" value="UniProtKB"/>
</dbReference>
<dbReference type="GO" id="GO:0046982">
    <property type="term" value="F:protein heterodimerization activity"/>
    <property type="evidence" value="ECO:0007669"/>
    <property type="project" value="Ensembl"/>
</dbReference>
<dbReference type="GO" id="GO:0016175">
    <property type="term" value="F:superoxide-generating NAD(P)H oxidase activity"/>
    <property type="evidence" value="ECO:0000318"/>
    <property type="project" value="GO_Central"/>
</dbReference>
<dbReference type="GO" id="GO:0106292">
    <property type="term" value="F:superoxide-generating NADPH oxidase activity"/>
    <property type="evidence" value="ECO:0000250"/>
    <property type="project" value="UniProtKB"/>
</dbReference>
<dbReference type="GO" id="GO:0006952">
    <property type="term" value="P:defense response"/>
    <property type="evidence" value="ECO:0000318"/>
    <property type="project" value="GO_Central"/>
</dbReference>
<dbReference type="GO" id="GO:0006954">
    <property type="term" value="P:inflammatory response"/>
    <property type="evidence" value="ECO:0000250"/>
    <property type="project" value="UniProtKB"/>
</dbReference>
<dbReference type="GO" id="GO:0045087">
    <property type="term" value="P:innate immune response"/>
    <property type="evidence" value="ECO:0000250"/>
    <property type="project" value="UniProtKB"/>
</dbReference>
<dbReference type="GO" id="GO:0034220">
    <property type="term" value="P:monoatomic ion transmembrane transport"/>
    <property type="evidence" value="ECO:0007669"/>
    <property type="project" value="UniProtKB-KW"/>
</dbReference>
<dbReference type="GO" id="GO:0045730">
    <property type="term" value="P:respiratory burst"/>
    <property type="evidence" value="ECO:0007669"/>
    <property type="project" value="Ensembl"/>
</dbReference>
<dbReference type="GO" id="GO:0042554">
    <property type="term" value="P:superoxide anion generation"/>
    <property type="evidence" value="ECO:0000250"/>
    <property type="project" value="UniProtKB"/>
</dbReference>
<dbReference type="GO" id="GO:0006801">
    <property type="term" value="P:superoxide metabolic process"/>
    <property type="evidence" value="ECO:0000314"/>
    <property type="project" value="AgBase"/>
</dbReference>
<dbReference type="CDD" id="cd06186">
    <property type="entry name" value="NOX_Duox_like_FAD_NADP"/>
    <property type="match status" value="1"/>
</dbReference>
<dbReference type="FunFam" id="2.40.30.10:FF:000030">
    <property type="entry name" value="cytochrome b-245 heavy chain"/>
    <property type="match status" value="1"/>
</dbReference>
<dbReference type="FunFam" id="3.40.50.80:FF:000004">
    <property type="entry name" value="NADPH oxidase isoform 2"/>
    <property type="match status" value="1"/>
</dbReference>
<dbReference type="Gene3D" id="3.40.50.80">
    <property type="entry name" value="Nucleotide-binding domain of ferredoxin-NADP reductase (FNR) module"/>
    <property type="match status" value="1"/>
</dbReference>
<dbReference type="Gene3D" id="2.40.30.10">
    <property type="entry name" value="Translation factors"/>
    <property type="match status" value="1"/>
</dbReference>
<dbReference type="InterPro" id="IPR000778">
    <property type="entry name" value="Cyt_b245_heavy_chain"/>
</dbReference>
<dbReference type="InterPro" id="IPR013112">
    <property type="entry name" value="FAD-bd_8"/>
</dbReference>
<dbReference type="InterPro" id="IPR017927">
    <property type="entry name" value="FAD-bd_FR_type"/>
</dbReference>
<dbReference type="InterPro" id="IPR013130">
    <property type="entry name" value="Fe3_Rdtase_TM_dom"/>
</dbReference>
<dbReference type="InterPro" id="IPR013121">
    <property type="entry name" value="Fe_red_NAD-bd_6"/>
</dbReference>
<dbReference type="InterPro" id="IPR039261">
    <property type="entry name" value="FNR_nucleotide-bd"/>
</dbReference>
<dbReference type="InterPro" id="IPR050369">
    <property type="entry name" value="RBOH/FRE"/>
</dbReference>
<dbReference type="InterPro" id="IPR017938">
    <property type="entry name" value="Riboflavin_synthase-like_b-brl"/>
</dbReference>
<dbReference type="PANTHER" id="PTHR11972:SF60">
    <property type="entry name" value="CYTOCHROME B-245 HEAVY CHAIN"/>
    <property type="match status" value="1"/>
</dbReference>
<dbReference type="PANTHER" id="PTHR11972">
    <property type="entry name" value="NADPH OXIDASE"/>
    <property type="match status" value="1"/>
</dbReference>
<dbReference type="Pfam" id="PF08022">
    <property type="entry name" value="FAD_binding_8"/>
    <property type="match status" value="1"/>
</dbReference>
<dbReference type="Pfam" id="PF01794">
    <property type="entry name" value="Ferric_reduct"/>
    <property type="match status" value="1"/>
</dbReference>
<dbReference type="Pfam" id="PF08030">
    <property type="entry name" value="NAD_binding_6"/>
    <property type="match status" value="1"/>
</dbReference>
<dbReference type="PRINTS" id="PR00466">
    <property type="entry name" value="GP91PHOX"/>
</dbReference>
<dbReference type="SFLD" id="SFLDS00052">
    <property type="entry name" value="Ferric_Reductase_Domain"/>
    <property type="match status" value="1"/>
</dbReference>
<dbReference type="SFLD" id="SFLDG01168">
    <property type="entry name" value="Ferric_reductase_subgroup_(FRE"/>
    <property type="match status" value="1"/>
</dbReference>
<dbReference type="SUPFAM" id="SSF52343">
    <property type="entry name" value="Ferredoxin reductase-like, C-terminal NADP-linked domain"/>
    <property type="match status" value="1"/>
</dbReference>
<dbReference type="SUPFAM" id="SSF63380">
    <property type="entry name" value="Riboflavin synthase domain-like"/>
    <property type="match status" value="1"/>
</dbReference>
<dbReference type="PROSITE" id="PS51384">
    <property type="entry name" value="FAD_FR"/>
    <property type="match status" value="1"/>
</dbReference>
<evidence type="ECO:0000250" key="1">
    <source>
        <dbReference type="UniProtKB" id="P04839"/>
    </source>
</evidence>
<evidence type="ECO:0000250" key="2">
    <source>
        <dbReference type="UniProtKB" id="P13498"/>
    </source>
</evidence>
<evidence type="ECO:0000250" key="3">
    <source>
        <dbReference type="UniProtKB" id="Q61093"/>
    </source>
</evidence>
<evidence type="ECO:0000255" key="4"/>
<evidence type="ECO:0000255" key="5">
    <source>
        <dbReference type="PROSITE-ProRule" id="PRU00716"/>
    </source>
</evidence>
<evidence type="ECO:0000305" key="6"/>
<accession>O46522</accession>
<accession>A4IF96</accession>
<keyword id="KW-1003">Cell membrane</keyword>
<keyword id="KW-0249">Electron transport</keyword>
<keyword id="KW-0274">FAD</keyword>
<keyword id="KW-0285">Flavoprotein</keyword>
<keyword id="KW-0325">Glycoprotein</keyword>
<keyword id="KW-0349">Heme</keyword>
<keyword id="KW-0407">Ion channel</keyword>
<keyword id="KW-0406">Ion transport</keyword>
<keyword id="KW-0408">Iron</keyword>
<keyword id="KW-1017">Isopeptide bond</keyword>
<keyword id="KW-0472">Membrane</keyword>
<keyword id="KW-0479">Metal-binding</keyword>
<keyword id="KW-0521">NADP</keyword>
<keyword id="KW-0560">Oxidoreductase</keyword>
<keyword id="KW-0597">Phosphoprotein</keyword>
<keyword id="KW-1185">Reference proteome</keyword>
<keyword id="KW-0812">Transmembrane</keyword>
<keyword id="KW-1133">Transmembrane helix</keyword>
<keyword id="KW-0813">Transport</keyword>
<keyword id="KW-0832">Ubl conjugation</keyword>
<keyword id="KW-0851">Voltage-gated channel</keyword>
<reference key="1">
    <citation type="journal article" date="1998" name="J. Leukoc. Biol.">
        <title>Cloning and sequencing of the bovine flavocytochrome b subunit proteins, gp91-phox and p22-phox: comparison with other known flavocytochrome b sequences.</title>
        <authorList>
            <person name="Davis A.R."/>
            <person name="Mascolo P.L."/>
            <person name="Bunger P.L."/>
            <person name="Sipes K.M."/>
            <person name="Quinn M.T."/>
        </authorList>
    </citation>
    <scope>NUCLEOTIDE SEQUENCE [MRNA]</scope>
</reference>
<reference key="2">
    <citation type="submission" date="2007-03" db="EMBL/GenBank/DDBJ databases">
        <authorList>
            <consortium name="NIH - Mammalian Gene Collection (MGC) project"/>
        </authorList>
    </citation>
    <scope>NUCLEOTIDE SEQUENCE [LARGE SCALE MRNA]</scope>
    <source>
        <strain>Hereford</strain>
        <tissue>Thymus</tissue>
    </source>
</reference>
<protein>
    <recommendedName>
        <fullName evidence="1">NADPH oxidase 2</fullName>
        <ecNumber evidence="1">1.6.3.-</ecNumber>
    </recommendedName>
    <alternativeName>
        <fullName>CGD91-phox</fullName>
    </alternativeName>
    <alternativeName>
        <fullName>Cytochrome b(558) subunit beta</fullName>
        <shortName>Cytochrome b558 subunit beta</shortName>
    </alternativeName>
    <alternativeName>
        <fullName>Cytochrome b-245 heavy chain</fullName>
    </alternativeName>
    <alternativeName>
        <fullName>Heme-binding membrane glycoprotein gp91phox</fullName>
    </alternativeName>
    <alternativeName>
        <fullName>Neutrophil cytochrome b 91 kDa polypeptide</fullName>
    </alternativeName>
    <alternativeName>
        <fullName>gp91-1</fullName>
    </alternativeName>
    <alternativeName>
        <fullName>gp91-phox</fullName>
    </alternativeName>
    <alternativeName>
        <fullName>p22 phagocyte B-cytochrome</fullName>
    </alternativeName>
</protein>
<sequence>MGNWVVNEGISIFVILVWLGMNVFLFVWYYRVYDIPDKFFYTRKLLGSALALARAPAACLNFNCMLILLPVCRNLLSFLRGSSACCSTRIRRQLDRNLTFHKMVAWMIALHTAIHTIAHLFNVEWCVNARVNNSDPYSIALSDIGDKPNETYLNFVRQRIKNPEGGLYVAVTRLAGITGVVITLCLILIITSSTKTIRRSYFEVFWYTHHLFVIFFIGLAIHGAQRIVRGQTAESLLKHQPRNCYQNISQWGKIENCPIPEFSGNPPMTWKWIVGPMFLYLCERLVRFWRSQQKVVITKVVTHPFKTIELQMKKKGFKMEVGQYIFVKCPVVSKLEWHPFTLTSAPEEDFFSIHIRIVGDWTEGLFKACGCDKQEFQDAWKLPKIAVDGPFGTASEDVFSYEVVMLVGAGIGVTPFASILKSVWYKYCNKAPNLRLKKIYFYWLCRDTHAFEWFADLLQLLETQMQEKNNTDFLSYNICLTGWDESQASHFAMHHDEEKDVITGLKQKTLYGRPNWDNEFKTIGSQHPNTRIGVFLCGPEALADTLNKQCISNSDSGPRGVHFIFNKENF</sequence>
<gene>
    <name evidence="1" type="primary">CYBB</name>
</gene>
<comment type="function">
    <text evidence="1 2 3">Catalytic subunit of the phagocyte NADPH oxidase complex that mediates the transfer of electrons from cytosolic NADPH to O2 to produce the superoxide anion (O2(-)). In the activated complex, electrons are first transferred from NADPH to flavin adenine dinucleotide (FAD) and subsequently transferred via two heme molecules to molecular oxygen, producing superoxide through an outer-sphere reaction. Activation of the NADPH oxidase complex is initiated by the assembly of cytosolic subunits of the NADPH oxidase complex with the core NADPH oxidase complex to form a complex at the plasma membrane or phagosomal membrane (By similarity). This activation process is initiated by phosphorylation dependent binding of the cytosolic NCF1/p47-phox subunit to the C-terminus of CYBA/p22-phox (By similarity). NADPH oxidase complex assembly is impaired through interaction with NRROS (By similarity).</text>
</comment>
<comment type="catalytic activity">
    <reaction evidence="1">
        <text>NADPH + 2 O2 = 2 superoxide + NADP(+) + H(+)</text>
        <dbReference type="Rhea" id="RHEA:63180"/>
        <dbReference type="ChEBI" id="CHEBI:15378"/>
        <dbReference type="ChEBI" id="CHEBI:15379"/>
        <dbReference type="ChEBI" id="CHEBI:18421"/>
        <dbReference type="ChEBI" id="CHEBI:57783"/>
        <dbReference type="ChEBI" id="CHEBI:58349"/>
    </reaction>
</comment>
<comment type="cofactor">
    <cofactor evidence="1">
        <name>FAD</name>
        <dbReference type="ChEBI" id="CHEBI:57692"/>
    </cofactor>
</comment>
<comment type="subunit">
    <text evidence="1 3">Component of the phagocyte NADPH oxidase core complex/cytochrome b558 complex, composed of CYBB (heavy chain (beta)) and CYBA (light chain (alpha)). Component of the phagocyte NADPH oxidase complex composed of an obligatory core heterodimer formed by the membrane proteins CYBA and CYBB and the cytosolic regulatory subunits NCF1/p47-phox, NCF2/p67-phox, NCF4/p40-phox and the small GTPase RAC1 or RAC2. Interacts with NCF1 (phosphorylated form). Interacts with NCF2; the interaction is enhanced in the presence of GBP7 (By similarity). Interacts with RAC2. Interacts with RAC1. Interacts with calprotectin (S100A8/9) (By similarity). Interacts with NRROS; the interaction is direct and impairs formation of a stable NADPH oxidase complex (By similarity). Interacts with CYBC1; CYBC1 may act as a chaperone stabilizing Cytochrome b-245 heterodimer (By similarity). The CYBA-CYBB complex interacts with GBP7 (By similarity).</text>
</comment>
<comment type="subcellular location">
    <subcellularLocation>
        <location evidence="1">Cell membrane</location>
        <topology evidence="1">Multi-pass membrane protein</topology>
    </subcellularLocation>
    <text evidence="1">As unassembled monomer may localize to the endoplasmic reticulum.</text>
</comment>
<comment type="PTM">
    <text evidence="1">Glycosylated.</text>
</comment>
<comment type="PTM">
    <text evidence="1">Phosphorylated on Ser and Thr residues by PKC during neutrophils activation. Phosphorylation enhances the NADPH oxidase activity and stimulates its interaction with RAC2, NCF2/p67-phox, and NCF1/p47-phox.</text>
</comment>
<comment type="PTM">
    <text evidence="3">Undergoes 'Lys-48'-linked polyubiquitination, likely by RNF145, triggering endoplasmic reticulum-associated degradation.</text>
</comment>
<feature type="initiator methionine" description="Removed" evidence="1">
    <location>
        <position position="1"/>
    </location>
</feature>
<feature type="chain" id="PRO_0000210144" description="NADPH oxidase 2">
    <location>
        <begin position="2"/>
        <end position="570"/>
    </location>
</feature>
<feature type="topological domain" description="Cytoplasmic" evidence="6">
    <location>
        <begin position="2"/>
        <end position="9"/>
    </location>
</feature>
<feature type="transmembrane region" description="Helical" evidence="1">
    <location>
        <begin position="10"/>
        <end position="36"/>
    </location>
</feature>
<feature type="topological domain" description="Extracellular" evidence="6">
    <location>
        <begin position="37"/>
        <end position="46"/>
    </location>
</feature>
<feature type="transmembrane region" description="Helical" evidence="1">
    <location>
        <begin position="47"/>
        <end position="72"/>
    </location>
</feature>
<feature type="topological domain" description="Cytoplasmic" evidence="6">
    <location>
        <begin position="73"/>
        <end position="95"/>
    </location>
</feature>
<feature type="transmembrane region" description="Helical" evidence="1">
    <location>
        <begin position="96"/>
        <end position="130"/>
    </location>
</feature>
<feature type="topological domain" description="Extracellular" evidence="6">
    <location>
        <begin position="131"/>
        <end position="163"/>
    </location>
</feature>
<feature type="transmembrane region" description="Helical" evidence="1">
    <location>
        <begin position="164"/>
        <end position="194"/>
    </location>
</feature>
<feature type="topological domain" description="Cytoplasmic" evidence="6">
    <location>
        <begin position="195"/>
        <end position="203"/>
    </location>
</feature>
<feature type="transmembrane region" description="Helical" evidence="1">
    <location>
        <begin position="204"/>
        <end position="222"/>
    </location>
</feature>
<feature type="topological domain" description="Extracellular" evidence="6">
    <location>
        <begin position="223"/>
        <end position="267"/>
    </location>
</feature>
<feature type="transmembrane region" description="Helical" evidence="1">
    <location>
        <begin position="268"/>
        <end position="285"/>
    </location>
</feature>
<feature type="topological domain" description="Cytoplasmic" evidence="6">
    <location>
        <begin position="286"/>
        <end position="570"/>
    </location>
</feature>
<feature type="domain" description="Ferric oxidoreductase">
    <location>
        <begin position="54"/>
        <end position="286"/>
    </location>
</feature>
<feature type="domain" description="FAD-binding FR-type" evidence="5">
    <location>
        <begin position="287"/>
        <end position="397"/>
    </location>
</feature>
<feature type="binding site" description="axial binding residue" evidence="1">
    <location>
        <position position="101"/>
    </location>
    <ligand>
        <name>heme b</name>
        <dbReference type="ChEBI" id="CHEBI:60344"/>
        <label>1</label>
    </ligand>
    <ligandPart>
        <name>Fe</name>
        <dbReference type="ChEBI" id="CHEBI:18248"/>
    </ligandPart>
</feature>
<feature type="binding site" description="axial binding residue" evidence="1">
    <location>
        <position position="115"/>
    </location>
    <ligand>
        <name>heme b</name>
        <dbReference type="ChEBI" id="CHEBI:60344"/>
        <label>2</label>
    </ligand>
    <ligandPart>
        <name>Fe</name>
        <dbReference type="ChEBI" id="CHEBI:18248"/>
    </ligandPart>
</feature>
<feature type="binding site" evidence="1">
    <location>
        <position position="199"/>
    </location>
    <ligand>
        <name>FAD</name>
        <dbReference type="ChEBI" id="CHEBI:57692"/>
    </ligand>
</feature>
<feature type="binding site" evidence="1">
    <location>
        <position position="200"/>
    </location>
    <ligand>
        <name>FAD</name>
        <dbReference type="ChEBI" id="CHEBI:57692"/>
    </ligand>
</feature>
<feature type="binding site" evidence="1">
    <location>
        <position position="206"/>
    </location>
    <ligand>
        <name>heme b</name>
        <dbReference type="ChEBI" id="CHEBI:60344"/>
        <label>1</label>
    </ligand>
</feature>
<feature type="binding site" description="axial binding residue" evidence="1">
    <location>
        <position position="209"/>
    </location>
    <ligand>
        <name>heme b</name>
        <dbReference type="ChEBI" id="CHEBI:60344"/>
        <label>1</label>
    </ligand>
    <ligandPart>
        <name>Fe</name>
        <dbReference type="ChEBI" id="CHEBI:18248"/>
    </ligandPart>
</feature>
<feature type="binding site" description="axial binding residue" evidence="1">
    <location>
        <position position="222"/>
    </location>
    <ligand>
        <name>heme b</name>
        <dbReference type="ChEBI" id="CHEBI:60344"/>
        <label>2</label>
    </ligand>
    <ligandPart>
        <name>Fe</name>
        <dbReference type="ChEBI" id="CHEBI:18248"/>
    </ligandPart>
</feature>
<feature type="binding site" evidence="1">
    <location>
        <position position="226"/>
    </location>
    <ligand>
        <name>heme b</name>
        <dbReference type="ChEBI" id="CHEBI:60344"/>
        <label>2</label>
    </ligand>
</feature>
<feature type="binding site" evidence="1">
    <location>
        <position position="227"/>
    </location>
    <ligand>
        <name>heme b</name>
        <dbReference type="ChEBI" id="CHEBI:60344"/>
        <label>2</label>
    </ligand>
</feature>
<feature type="binding site" evidence="1">
    <location>
        <position position="268"/>
    </location>
    <ligand>
        <name>heme b</name>
        <dbReference type="ChEBI" id="CHEBI:60344"/>
        <label>2</label>
    </ligand>
</feature>
<feature type="binding site" evidence="1">
    <location>
        <position position="280"/>
    </location>
    <ligand>
        <name>heme b</name>
        <dbReference type="ChEBI" id="CHEBI:60344"/>
        <label>1</label>
    </ligand>
</feature>
<feature type="binding site" evidence="1">
    <location>
        <position position="287"/>
    </location>
    <ligand>
        <name>heme b</name>
        <dbReference type="ChEBI" id="CHEBI:60344"/>
        <label>1</label>
    </ligand>
</feature>
<feature type="binding site" evidence="1">
    <location>
        <position position="337"/>
    </location>
    <ligand>
        <name>FAD</name>
        <dbReference type="ChEBI" id="CHEBI:57692"/>
    </ligand>
</feature>
<feature type="binding site" evidence="1">
    <location>
        <position position="338"/>
    </location>
    <ligand>
        <name>FAD</name>
        <dbReference type="ChEBI" id="CHEBI:57692"/>
    </ligand>
</feature>
<feature type="binding site" evidence="1">
    <location>
        <position position="339"/>
    </location>
    <ligand>
        <name>FAD</name>
        <dbReference type="ChEBI" id="CHEBI:57692"/>
    </ligand>
</feature>
<feature type="binding site" evidence="1">
    <location>
        <position position="341"/>
    </location>
    <ligand>
        <name>FAD</name>
        <dbReference type="ChEBI" id="CHEBI:57692"/>
    </ligand>
</feature>
<feature type="binding site" evidence="1">
    <location>
        <position position="354"/>
    </location>
    <ligand>
        <name>FAD</name>
        <dbReference type="ChEBI" id="CHEBI:57692"/>
    </ligand>
</feature>
<feature type="binding site" evidence="1">
    <location>
        <position position="356"/>
    </location>
    <ligand>
        <name>FAD</name>
        <dbReference type="ChEBI" id="CHEBI:57692"/>
    </ligand>
</feature>
<feature type="binding site" evidence="1">
    <location>
        <position position="361"/>
    </location>
    <ligand>
        <name>FAD</name>
        <dbReference type="ChEBI" id="CHEBI:57692"/>
    </ligand>
</feature>
<feature type="binding site" evidence="1">
    <location>
        <position position="362"/>
    </location>
    <ligand>
        <name>FAD</name>
        <dbReference type="ChEBI" id="CHEBI:57692"/>
    </ligand>
</feature>
<feature type="binding site" evidence="1">
    <location>
        <position position="411"/>
    </location>
    <ligand>
        <name>NADPH</name>
        <dbReference type="ChEBI" id="CHEBI:57783"/>
    </ligand>
</feature>
<feature type="binding site" evidence="1">
    <location>
        <position position="446"/>
    </location>
    <ligand>
        <name>NADPH</name>
        <dbReference type="ChEBI" id="CHEBI:57783"/>
    </ligand>
</feature>
<feature type="binding site" evidence="1">
    <location>
        <position position="481"/>
    </location>
    <ligand>
        <name>NADPH</name>
        <dbReference type="ChEBI" id="CHEBI:57783"/>
    </ligand>
</feature>
<feature type="binding site" evidence="1">
    <location>
        <position position="513"/>
    </location>
    <ligand>
        <name>NADPH</name>
        <dbReference type="ChEBI" id="CHEBI:57783"/>
    </ligand>
</feature>
<feature type="glycosylation site" description="N-linked (GlcNAc...) asparagine" evidence="4">
    <location>
        <position position="132"/>
    </location>
</feature>
<feature type="glycosylation site" description="N-linked (GlcNAc...) asparagine" evidence="4">
    <location>
        <position position="149"/>
    </location>
</feature>
<feature type="glycosylation site" description="N-linked (GlcNAc...) asparagine" evidence="4">
    <location>
        <position position="247"/>
    </location>
</feature>
<feature type="cross-link" description="Glycyl lysine isopeptide (Lys-Gly) (interchain with G-Cter in ubiquitin)" evidence="3">
    <location>
        <position position="161"/>
    </location>
</feature>
<feature type="cross-link" description="Glycyl lysine isopeptide (Lys-Gly) (interchain with G-Cter in ubiquitin)" evidence="3">
    <location>
        <position position="294"/>
    </location>
</feature>
<feature type="cross-link" description="Glycyl lysine isopeptide (Lys-Gly) (interchain with G-Cter in ubiquitin)" evidence="3">
    <location>
        <position position="299"/>
    </location>
</feature>
<feature type="cross-link" description="Glycyl lysine isopeptide (Lys-Gly) (interchain with G-Cter in ubiquitin)" evidence="3">
    <location>
        <position position="306"/>
    </location>
</feature>
<feature type="cross-link" description="Glycyl lysine isopeptide (Lys-Gly) (interchain with G-Cter in ubiquitin)" evidence="3">
    <location>
        <position position="328"/>
    </location>
</feature>
<feature type="cross-link" description="Glycyl lysine isopeptide (Lys-Gly) (interchain with G-Cter in ubiquitin)" evidence="3">
    <location>
        <position position="334"/>
    </location>
</feature>
<feature type="cross-link" description="Glycyl lysine isopeptide (Lys-Gly) (interchain with G-Cter in ubiquitin)" evidence="3">
    <location>
        <position position="381"/>
    </location>
</feature>
<feature type="cross-link" description="Glycyl lysine isopeptide (Lys-Gly) (interchain with G-Cter in ubiquitin)" evidence="3">
    <location>
        <position position="506"/>
    </location>
</feature>
<feature type="cross-link" description="Glycyl lysine isopeptide (Lys-Gly) (interchain with G-Cter in ubiquitin)" evidence="3">
    <location>
        <position position="567"/>
    </location>
</feature>
<organism>
    <name type="scientific">Bos taurus</name>
    <name type="common">Bovine</name>
    <dbReference type="NCBI Taxonomy" id="9913"/>
    <lineage>
        <taxon>Eukaryota</taxon>
        <taxon>Metazoa</taxon>
        <taxon>Chordata</taxon>
        <taxon>Craniata</taxon>
        <taxon>Vertebrata</taxon>
        <taxon>Euteleostomi</taxon>
        <taxon>Mammalia</taxon>
        <taxon>Eutheria</taxon>
        <taxon>Laurasiatheria</taxon>
        <taxon>Artiodactyla</taxon>
        <taxon>Ruminantia</taxon>
        <taxon>Pecora</taxon>
        <taxon>Bovidae</taxon>
        <taxon>Bovinae</taxon>
        <taxon>Bos</taxon>
    </lineage>
</organism>
<proteinExistence type="evidence at transcript level"/>
<name>CY24B_BOVIN</name>